<dbReference type="EMBL" id="CP001114">
    <property type="protein sequence ID" value="ACO45699.1"/>
    <property type="molecule type" value="Genomic_DNA"/>
</dbReference>
<dbReference type="RefSeq" id="WP_012692822.1">
    <property type="nucleotide sequence ID" value="NC_012526.1"/>
</dbReference>
<dbReference type="SMR" id="C1D1H5"/>
<dbReference type="STRING" id="546414.Deide_08310"/>
<dbReference type="PaxDb" id="546414-Deide_08310"/>
<dbReference type="KEGG" id="ddr:Deide_08310"/>
<dbReference type="eggNOG" id="COG2332">
    <property type="taxonomic scope" value="Bacteria"/>
</dbReference>
<dbReference type="HOGENOM" id="CLU_079503_2_0_0"/>
<dbReference type="OrthoDB" id="9793584at2"/>
<dbReference type="Proteomes" id="UP000002208">
    <property type="component" value="Chromosome"/>
</dbReference>
<dbReference type="GO" id="GO:0005886">
    <property type="term" value="C:plasma membrane"/>
    <property type="evidence" value="ECO:0007669"/>
    <property type="project" value="UniProtKB-SubCell"/>
</dbReference>
<dbReference type="GO" id="GO:0020037">
    <property type="term" value="F:heme binding"/>
    <property type="evidence" value="ECO:0007669"/>
    <property type="project" value="InterPro"/>
</dbReference>
<dbReference type="GO" id="GO:0046872">
    <property type="term" value="F:metal ion binding"/>
    <property type="evidence" value="ECO:0007669"/>
    <property type="project" value="UniProtKB-KW"/>
</dbReference>
<dbReference type="GO" id="GO:0017004">
    <property type="term" value="P:cytochrome complex assembly"/>
    <property type="evidence" value="ECO:0007669"/>
    <property type="project" value="UniProtKB-KW"/>
</dbReference>
<dbReference type="Gene3D" id="2.40.50.140">
    <property type="entry name" value="Nucleic acid-binding proteins"/>
    <property type="match status" value="1"/>
</dbReference>
<dbReference type="HAMAP" id="MF_01959">
    <property type="entry name" value="CcmE"/>
    <property type="match status" value="1"/>
</dbReference>
<dbReference type="InterPro" id="IPR004329">
    <property type="entry name" value="CcmE"/>
</dbReference>
<dbReference type="InterPro" id="IPR036127">
    <property type="entry name" value="CcmE-like_sf"/>
</dbReference>
<dbReference type="InterPro" id="IPR012340">
    <property type="entry name" value="NA-bd_OB-fold"/>
</dbReference>
<dbReference type="NCBIfam" id="NF009727">
    <property type="entry name" value="PRK13254.1-1"/>
    <property type="match status" value="1"/>
</dbReference>
<dbReference type="PANTHER" id="PTHR34128">
    <property type="entry name" value="CYTOCHROME C-TYPE BIOGENESIS PROTEIN CCME HOMOLOG, MITOCHONDRIAL"/>
    <property type="match status" value="1"/>
</dbReference>
<dbReference type="PANTHER" id="PTHR34128:SF2">
    <property type="entry name" value="CYTOCHROME C-TYPE BIOGENESIS PROTEIN CCME HOMOLOG, MITOCHONDRIAL"/>
    <property type="match status" value="1"/>
</dbReference>
<dbReference type="Pfam" id="PF03100">
    <property type="entry name" value="CcmE"/>
    <property type="match status" value="1"/>
</dbReference>
<dbReference type="SUPFAM" id="SSF82093">
    <property type="entry name" value="Heme chaperone CcmE"/>
    <property type="match status" value="1"/>
</dbReference>
<accession>C1D1H5</accession>
<evidence type="ECO:0000255" key="1">
    <source>
        <dbReference type="HAMAP-Rule" id="MF_01959"/>
    </source>
</evidence>
<evidence type="ECO:0000256" key="2">
    <source>
        <dbReference type="SAM" id="MobiDB-lite"/>
    </source>
</evidence>
<comment type="function">
    <text evidence="1">Heme chaperone required for the biogenesis of c-type cytochromes. Transiently binds heme delivered by CcmC and transfers the heme to apo-cytochromes in a process facilitated by CcmF and CcmH.</text>
</comment>
<comment type="subcellular location">
    <subcellularLocation>
        <location evidence="1">Cell membrane</location>
        <topology evidence="1">Single-pass type II membrane protein</topology>
    </subcellularLocation>
</comment>
<comment type="similarity">
    <text evidence="1">Belongs to the CcmE/CycJ family.</text>
</comment>
<keyword id="KW-1003">Cell membrane</keyword>
<keyword id="KW-0201">Cytochrome c-type biogenesis</keyword>
<keyword id="KW-0349">Heme</keyword>
<keyword id="KW-0408">Iron</keyword>
<keyword id="KW-0472">Membrane</keyword>
<keyword id="KW-0479">Metal-binding</keyword>
<keyword id="KW-1185">Reference proteome</keyword>
<keyword id="KW-0735">Signal-anchor</keyword>
<keyword id="KW-0812">Transmembrane</keyword>
<keyword id="KW-1133">Transmembrane helix</keyword>
<feature type="chain" id="PRO_1000216212" description="Cytochrome c-type biogenesis protein CcmE">
    <location>
        <begin position="1"/>
        <end position="158"/>
    </location>
</feature>
<feature type="topological domain" description="Cytoplasmic" evidence="1">
    <location>
        <begin position="1"/>
        <end position="23"/>
    </location>
</feature>
<feature type="transmembrane region" description="Helical; Signal-anchor for type II membrane protein" evidence="1">
    <location>
        <begin position="24"/>
        <end position="44"/>
    </location>
</feature>
<feature type="topological domain" description="Extracellular" evidence="1">
    <location>
        <begin position="45"/>
        <end position="158"/>
    </location>
</feature>
<feature type="region of interest" description="Disordered" evidence="2">
    <location>
        <begin position="1"/>
        <end position="20"/>
    </location>
</feature>
<feature type="compositionally biased region" description="Polar residues" evidence="2">
    <location>
        <begin position="1"/>
        <end position="11"/>
    </location>
</feature>
<feature type="binding site" description="covalent" evidence="1">
    <location>
        <position position="137"/>
    </location>
    <ligand>
        <name>heme</name>
        <dbReference type="ChEBI" id="CHEBI:30413"/>
    </ligand>
</feature>
<feature type="binding site" description="axial binding residue" evidence="1">
    <location>
        <position position="141"/>
    </location>
    <ligand>
        <name>heme</name>
        <dbReference type="ChEBI" id="CHEBI:30413"/>
    </ligand>
    <ligandPart>
        <name>Fe</name>
        <dbReference type="ChEBI" id="CHEBI:18248"/>
    </ligandPart>
</feature>
<organism>
    <name type="scientific">Deinococcus deserti (strain DSM 17065 / CIP 109153 / LMG 22923 / VCD115)</name>
    <dbReference type="NCBI Taxonomy" id="546414"/>
    <lineage>
        <taxon>Bacteria</taxon>
        <taxon>Thermotogati</taxon>
        <taxon>Deinococcota</taxon>
        <taxon>Deinococci</taxon>
        <taxon>Deinococcales</taxon>
        <taxon>Deinococcaceae</taxon>
        <taxon>Deinococcus</taxon>
    </lineage>
</organism>
<protein>
    <recommendedName>
        <fullName evidence="1">Cytochrome c-type biogenesis protein CcmE</fullName>
    </recommendedName>
    <alternativeName>
        <fullName evidence="1">Cytochrome c maturation protein E</fullName>
    </alternativeName>
    <alternativeName>
        <fullName evidence="1">Heme chaperone CcmE</fullName>
    </alternativeName>
</protein>
<proteinExistence type="inferred from homology"/>
<reference key="1">
    <citation type="journal article" date="2009" name="PLoS Genet.">
        <title>Alliance of proteomics and genomics to unravel the specificities of Sahara bacterium Deinococcus deserti.</title>
        <authorList>
            <person name="de Groot A."/>
            <person name="Dulermo R."/>
            <person name="Ortet P."/>
            <person name="Blanchard L."/>
            <person name="Guerin P."/>
            <person name="Fernandez B."/>
            <person name="Vacherie B."/>
            <person name="Dossat C."/>
            <person name="Jolivet E."/>
            <person name="Siguier P."/>
            <person name="Chandler M."/>
            <person name="Barakat M."/>
            <person name="Dedieu A."/>
            <person name="Barbe V."/>
            <person name="Heulin T."/>
            <person name="Sommer S."/>
            <person name="Achouak W."/>
            <person name="Armengaud J."/>
        </authorList>
    </citation>
    <scope>NUCLEOTIDE SEQUENCE [LARGE SCALE GENOMIC DNA]</scope>
    <source>
        <strain>DSM 17065 / CIP 109153 / LMG 22923 / VCD115</strain>
    </source>
</reference>
<name>CCME_DEIDV</name>
<sequence length="158" mass="17440">MTRPDSGSSPAPLSEARRRKRNPLPTVLGITALLGLAGFIAFGNLNKSLEYFVTPTEYQQQAAQLKGRPVRIGGLVKAVKYNPQSLELSFTVTDGGASFPVRYRGAVSDLFKENQGVVVRGEFEGQTFQARELIVKHSEQYDVPKTQAELRDLLEQSE</sequence>
<gene>
    <name evidence="1" type="primary">ccmE</name>
    <name evidence="1" type="synonym">cycJ</name>
    <name type="ordered locus">Deide_08310</name>
</gene>